<keyword id="KW-0131">Cell cycle</keyword>
<keyword id="KW-0132">Cell division</keyword>
<keyword id="KW-0137">Centromere</keyword>
<keyword id="KW-0158">Chromosome</keyword>
<keyword id="KW-0159">Chromosome partition</keyword>
<keyword id="KW-0963">Cytoplasm</keyword>
<keyword id="KW-0206">Cytoskeleton</keyword>
<keyword id="KW-0995">Kinetochore</keyword>
<keyword id="KW-0493">Microtubule</keyword>
<keyword id="KW-0498">Mitosis</keyword>
<keyword id="KW-0539">Nucleus</keyword>
<keyword id="KW-1185">Reference proteome</keyword>
<accession>P62505</accession>
<accession>Q7LGI9</accession>
<name>DAD3_SCHPO</name>
<sequence length="86" mass="9738">MSLEEKRALQNQILAEYANLASNLETLVKVLQDMVYNPSNNILDSLRDLEKEVGLVYTLYKASVWAILADLENNQEGKSGMFQDES</sequence>
<dbReference type="EMBL" id="CU329670">
    <property type="protein sequence ID" value="CAE46914.1"/>
    <property type="molecule type" value="Genomic_DNA"/>
</dbReference>
<dbReference type="RefSeq" id="NP_001018295.1">
    <property type="nucleotide sequence ID" value="NM_001020339.2"/>
</dbReference>
<dbReference type="SMR" id="P62505"/>
<dbReference type="BioGRID" id="280634">
    <property type="interactions" value="142"/>
</dbReference>
<dbReference type="ComplexPortal" id="CPX-10081">
    <property type="entry name" value="DASH complex"/>
</dbReference>
<dbReference type="FunCoup" id="P62505">
    <property type="interactions" value="6"/>
</dbReference>
<dbReference type="STRING" id="284812.P62505"/>
<dbReference type="PaxDb" id="4896-SPAC14C4.16.1"/>
<dbReference type="EnsemblFungi" id="SPAC14C4.16.1">
    <property type="protein sequence ID" value="SPAC14C4.16.1:pep"/>
    <property type="gene ID" value="SPAC14C4.16"/>
</dbReference>
<dbReference type="GeneID" id="3361558"/>
<dbReference type="KEGG" id="spo:3361558"/>
<dbReference type="PomBase" id="SPAC14C4.16">
    <property type="gene designation" value="dad3"/>
</dbReference>
<dbReference type="VEuPathDB" id="FungiDB:SPAC14C4.16"/>
<dbReference type="eggNOG" id="ENOG502SCNH">
    <property type="taxonomic scope" value="Eukaryota"/>
</dbReference>
<dbReference type="HOGENOM" id="CLU_118180_3_1_1"/>
<dbReference type="InParanoid" id="P62505"/>
<dbReference type="OMA" id="MEHASAH"/>
<dbReference type="PhylomeDB" id="P62505"/>
<dbReference type="PRO" id="PR:P62505"/>
<dbReference type="Proteomes" id="UP000002485">
    <property type="component" value="Chromosome I"/>
</dbReference>
<dbReference type="GO" id="GO:0005737">
    <property type="term" value="C:cytoplasm"/>
    <property type="evidence" value="ECO:0007669"/>
    <property type="project" value="UniProtKB-KW"/>
</dbReference>
<dbReference type="GO" id="GO:0042729">
    <property type="term" value="C:DASH complex"/>
    <property type="evidence" value="ECO:0000314"/>
    <property type="project" value="PomBase"/>
</dbReference>
<dbReference type="GO" id="GO:0005874">
    <property type="term" value="C:microtubule"/>
    <property type="evidence" value="ECO:0007669"/>
    <property type="project" value="UniProtKB-KW"/>
</dbReference>
<dbReference type="GO" id="GO:0072686">
    <property type="term" value="C:mitotic spindle"/>
    <property type="evidence" value="ECO:0007669"/>
    <property type="project" value="InterPro"/>
</dbReference>
<dbReference type="GO" id="GO:0008608">
    <property type="term" value="P:attachment of spindle microtubules to kinetochore"/>
    <property type="evidence" value="ECO:0000250"/>
    <property type="project" value="UniProtKB"/>
</dbReference>
<dbReference type="GO" id="GO:0051301">
    <property type="term" value="P:cell division"/>
    <property type="evidence" value="ECO:0007669"/>
    <property type="project" value="UniProtKB-KW"/>
</dbReference>
<dbReference type="GO" id="GO:1990758">
    <property type="term" value="P:mitotic sister chromatid biorientation"/>
    <property type="evidence" value="ECO:0000269"/>
    <property type="project" value="UniProtKB"/>
</dbReference>
<dbReference type="GO" id="GO:1990976">
    <property type="term" value="P:protein transport along microtubule to mitotic spindle pole body"/>
    <property type="evidence" value="ECO:0000250"/>
    <property type="project" value="UniProtKB"/>
</dbReference>
<dbReference type="GO" id="GO:0051455">
    <property type="term" value="P:spindle attachment to meiosis I kinetochore"/>
    <property type="evidence" value="ECO:0000305"/>
    <property type="project" value="PomBase"/>
</dbReference>
<dbReference type="InterPro" id="IPR013965">
    <property type="entry name" value="DASH_Dad3"/>
</dbReference>
<dbReference type="PANTHER" id="PTHR28017">
    <property type="entry name" value="DASH COMPLEX SUBUNIT DAD3"/>
    <property type="match status" value="1"/>
</dbReference>
<dbReference type="PANTHER" id="PTHR28017:SF1">
    <property type="entry name" value="DASH COMPLEX SUBUNIT DAD3"/>
    <property type="match status" value="1"/>
</dbReference>
<dbReference type="Pfam" id="PF08656">
    <property type="entry name" value="DASH_Dad3"/>
    <property type="match status" value="1"/>
</dbReference>
<feature type="chain" id="PRO_0000175950" description="DASH complex subunit dad3">
    <location>
        <begin position="1"/>
        <end position="86"/>
    </location>
</feature>
<proteinExistence type="evidence at protein level"/>
<protein>
    <recommendedName>
        <fullName>DASH complex subunit dad3</fullName>
    </recommendedName>
    <alternativeName>
        <fullName>Outer kinetochore protein dad3</fullName>
    </alternativeName>
</protein>
<reference key="1">
    <citation type="journal article" date="2002" name="Nature">
        <title>The genome sequence of Schizosaccharomyces pombe.</title>
        <authorList>
            <person name="Wood V."/>
            <person name="Gwilliam R."/>
            <person name="Rajandream M.A."/>
            <person name="Lyne M.H."/>
            <person name="Lyne R."/>
            <person name="Stewart A."/>
            <person name="Sgouros J.G."/>
            <person name="Peat N."/>
            <person name="Hayles J."/>
            <person name="Baker S.G."/>
            <person name="Basham D."/>
            <person name="Bowman S."/>
            <person name="Brooks K."/>
            <person name="Brown D."/>
            <person name="Brown S."/>
            <person name="Chillingworth T."/>
            <person name="Churcher C.M."/>
            <person name="Collins M."/>
            <person name="Connor R."/>
            <person name="Cronin A."/>
            <person name="Davis P."/>
            <person name="Feltwell T."/>
            <person name="Fraser A."/>
            <person name="Gentles S."/>
            <person name="Goble A."/>
            <person name="Hamlin N."/>
            <person name="Harris D.E."/>
            <person name="Hidalgo J."/>
            <person name="Hodgson G."/>
            <person name="Holroyd S."/>
            <person name="Hornsby T."/>
            <person name="Howarth S."/>
            <person name="Huckle E.J."/>
            <person name="Hunt S."/>
            <person name="Jagels K."/>
            <person name="James K.D."/>
            <person name="Jones L."/>
            <person name="Jones M."/>
            <person name="Leather S."/>
            <person name="McDonald S."/>
            <person name="McLean J."/>
            <person name="Mooney P."/>
            <person name="Moule S."/>
            <person name="Mungall K.L."/>
            <person name="Murphy L.D."/>
            <person name="Niblett D."/>
            <person name="Odell C."/>
            <person name="Oliver K."/>
            <person name="O'Neil S."/>
            <person name="Pearson D."/>
            <person name="Quail M.A."/>
            <person name="Rabbinowitsch E."/>
            <person name="Rutherford K.M."/>
            <person name="Rutter S."/>
            <person name="Saunders D."/>
            <person name="Seeger K."/>
            <person name="Sharp S."/>
            <person name="Skelton J."/>
            <person name="Simmonds M.N."/>
            <person name="Squares R."/>
            <person name="Squares S."/>
            <person name="Stevens K."/>
            <person name="Taylor K."/>
            <person name="Taylor R.G."/>
            <person name="Tivey A."/>
            <person name="Walsh S.V."/>
            <person name="Warren T."/>
            <person name="Whitehead S."/>
            <person name="Woodward J.R."/>
            <person name="Volckaert G."/>
            <person name="Aert R."/>
            <person name="Robben J."/>
            <person name="Grymonprez B."/>
            <person name="Weltjens I."/>
            <person name="Vanstreels E."/>
            <person name="Rieger M."/>
            <person name="Schaefer M."/>
            <person name="Mueller-Auer S."/>
            <person name="Gabel C."/>
            <person name="Fuchs M."/>
            <person name="Duesterhoeft A."/>
            <person name="Fritzc C."/>
            <person name="Holzer E."/>
            <person name="Moestl D."/>
            <person name="Hilbert H."/>
            <person name="Borzym K."/>
            <person name="Langer I."/>
            <person name="Beck A."/>
            <person name="Lehrach H."/>
            <person name="Reinhardt R."/>
            <person name="Pohl T.M."/>
            <person name="Eger P."/>
            <person name="Zimmermann W."/>
            <person name="Wedler H."/>
            <person name="Wambutt R."/>
            <person name="Purnelle B."/>
            <person name="Goffeau A."/>
            <person name="Cadieu E."/>
            <person name="Dreano S."/>
            <person name="Gloux S."/>
            <person name="Lelaure V."/>
            <person name="Mottier S."/>
            <person name="Galibert F."/>
            <person name="Aves S.J."/>
            <person name="Xiang Z."/>
            <person name="Hunt C."/>
            <person name="Moore K."/>
            <person name="Hurst S.M."/>
            <person name="Lucas M."/>
            <person name="Rochet M."/>
            <person name="Gaillardin C."/>
            <person name="Tallada V.A."/>
            <person name="Garzon A."/>
            <person name="Thode G."/>
            <person name="Daga R.R."/>
            <person name="Cruzado L."/>
            <person name="Jimenez J."/>
            <person name="Sanchez M."/>
            <person name="del Rey F."/>
            <person name="Benito J."/>
            <person name="Dominguez A."/>
            <person name="Revuelta J.L."/>
            <person name="Moreno S."/>
            <person name="Armstrong J."/>
            <person name="Forsburg S.L."/>
            <person name="Cerutti L."/>
            <person name="Lowe T."/>
            <person name="McCombie W.R."/>
            <person name="Paulsen I."/>
            <person name="Potashkin J."/>
            <person name="Shpakovski G.V."/>
            <person name="Ussery D."/>
            <person name="Barrell B.G."/>
            <person name="Nurse P."/>
        </authorList>
    </citation>
    <scope>NUCLEOTIDE SEQUENCE [LARGE SCALE GENOMIC DNA]</scope>
    <source>
        <strain>972 / ATCC 24843</strain>
    </source>
</reference>
<reference key="2">
    <citation type="journal article" date="2005" name="EMBO J.">
        <title>Molecular analysis of kinetochore architecture in fission yeast.</title>
        <authorList>
            <person name="Liu X."/>
            <person name="McLeod I."/>
            <person name="Anderson S."/>
            <person name="Yates J.R. III"/>
            <person name="He X."/>
        </authorList>
    </citation>
    <scope>FUNCTION</scope>
    <scope>IDENTIFICATION IN THE DASH COMPLEX</scope>
</reference>
<reference key="3">
    <citation type="journal article" date="2008" name="Mol. Biol. Cell">
        <title>Sister kinetochore recapture in fission yeast occurs by two distinct mechanisms, both requiring Dam1 and Klp2.</title>
        <authorList>
            <person name="Gachet Y."/>
            <person name="Reyes C."/>
            <person name="Courtheoux T."/>
            <person name="Goldstone S."/>
            <person name="Gay G."/>
            <person name="Serrurier C."/>
            <person name="Tournier S."/>
        </authorList>
    </citation>
    <scope>FUNCTION</scope>
</reference>
<reference key="4">
    <citation type="journal article" date="2010" name="Proc. Natl. Acad. Sci. U.S.A.">
        <title>A non-ring-like form of the Dam1 complex modulates microtubule dynamics in fission yeast.</title>
        <authorList>
            <person name="Gao Q."/>
            <person name="Courtheoux T."/>
            <person name="Gachet Y."/>
            <person name="Tournier S."/>
            <person name="He X."/>
        </authorList>
    </citation>
    <scope>FUNCTION</scope>
    <scope>SUBUNIT</scope>
    <scope>SUBCELLULAR LOCATION</scope>
</reference>
<organism>
    <name type="scientific">Schizosaccharomyces pombe (strain 972 / ATCC 24843)</name>
    <name type="common">Fission yeast</name>
    <dbReference type="NCBI Taxonomy" id="284812"/>
    <lineage>
        <taxon>Eukaryota</taxon>
        <taxon>Fungi</taxon>
        <taxon>Dikarya</taxon>
        <taxon>Ascomycota</taxon>
        <taxon>Taphrinomycotina</taxon>
        <taxon>Schizosaccharomycetes</taxon>
        <taxon>Schizosaccharomycetales</taxon>
        <taxon>Schizosaccharomycetaceae</taxon>
        <taxon>Schizosaccharomyces</taxon>
    </lineage>
</organism>
<comment type="function">
    <text evidence="2 3 4">Component of the DASH complex that connects microtubules with kinetochores and couples microtubule depolymerisation to chromosome movement; it is involved in retrieving kinetochores to the spindle poles before their re-orientation on the spindle in early mitosis and allows microtubule depolymerization to pull chromosomes apart and resist detachment during anaphase (PubMed:16079914, PubMed:20624975). Kinetochores, consisting of a centromere-associated inner segment and a microtubule-contacting outer segment, play a crucial role in chromosome segregation by mediating the physical connection between centromeric DNA and microtubules (PubMed:16079914, PubMed:20624975). Kinetochores also serve as an input point for the spindle assembly checkpoint, which delays anaphase until all chromosomes have bioriented on the mitotic spindle (PubMed:16079914). The DASH complex mediates bipolar kinetochore-microtubule attachments and facilitates the formation of additional interactions between outer kinetochore components and spindle microtubules (PubMed:16079914). During chromosome movement along the microtubule, it is required both for the sliding of kinetochores along the lateral side of the microtubule and also for microtubule end-on pulling on the kinetochore (PubMed:18256284). Modulates cytoplasmic microtubule dynamics by tracking the plus-end of shortening microtubules and slowing their depolymerization (PubMed:20624975).</text>
</comment>
<comment type="subunit">
    <text evidence="1 2 4">Component of the DASH complex consisting of ask1, dad1, dad2, dad3, dad4, dam1, duo1, dad5, spc19 and spc34, with a stoichiometry of one copy of each subunit per complex (PubMed:16079914). Multiple DASH complexes oligomerize to form a ring that encircles spindle microtubules and organizes the rod-like NDC80 complexes of the outer kinetochore (By similarity). DASH complex oligomerization strengthens microtubule attachments (By similarity). On cytoplasmic microtubules, DASH complexes appear to form patches instead of rings (PubMed:20624975).</text>
</comment>
<comment type="subcellular location">
    <subcellularLocation>
        <location evidence="1">Nucleus</location>
    </subcellularLocation>
    <subcellularLocation>
        <location evidence="1">Cytoplasm</location>
        <location evidence="1">Cytoskeleton</location>
        <location evidence="1">Spindle</location>
    </subcellularLocation>
    <subcellularLocation>
        <location evidence="1">Chromosome</location>
        <location evidence="1">Centromere</location>
        <location evidence="1">Kinetochore</location>
    </subcellularLocation>
    <subcellularLocation>
        <location evidence="6">Cytoplasm</location>
        <location evidence="6">Cytoskeleton</location>
    </subcellularLocation>
    <text evidence="1 6">Associates with the mitotic spindle and the kinetochore (By similarity). In the cytoskeleton, localizes to cortical microtubules (Probable).</text>
</comment>
<comment type="similarity">
    <text evidence="5">Belongs to the DASH complex DAD3 family.</text>
</comment>
<evidence type="ECO:0000250" key="1">
    <source>
        <dbReference type="UniProtKB" id="P69850"/>
    </source>
</evidence>
<evidence type="ECO:0000269" key="2">
    <source>
    </source>
</evidence>
<evidence type="ECO:0000269" key="3">
    <source>
    </source>
</evidence>
<evidence type="ECO:0000269" key="4">
    <source>
    </source>
</evidence>
<evidence type="ECO:0000305" key="5"/>
<evidence type="ECO:0000305" key="6">
    <source>
    </source>
</evidence>
<gene>
    <name type="primary">dad3</name>
    <name type="ORF">SPAC14C4.16</name>
</gene>